<protein>
    <recommendedName>
        <fullName>Flagellin FljJ</fullName>
    </recommendedName>
    <alternativeName>
        <fullName>29 kDa flagellin</fullName>
    </alternativeName>
</protein>
<dbReference type="EMBL" id="J01556">
    <property type="status" value="NOT_ANNOTATED_CDS"/>
    <property type="molecule type" value="Genomic_DNA"/>
</dbReference>
<dbReference type="EMBL" id="AE005673">
    <property type="status" value="NOT_ANNOTATED_CDS"/>
    <property type="molecule type" value="Genomic_DNA"/>
</dbReference>
<dbReference type="PIR" id="A03493">
    <property type="entry name" value="FLQL2C"/>
</dbReference>
<dbReference type="SMR" id="P02969"/>
<dbReference type="Proteomes" id="UP000001816">
    <property type="component" value="Chromosome"/>
</dbReference>
<dbReference type="GO" id="GO:0009288">
    <property type="term" value="C:bacterial-type flagellum"/>
    <property type="evidence" value="ECO:0007669"/>
    <property type="project" value="UniProtKB-SubCell"/>
</dbReference>
<dbReference type="GO" id="GO:0005576">
    <property type="term" value="C:extracellular region"/>
    <property type="evidence" value="ECO:0007669"/>
    <property type="project" value="UniProtKB-SubCell"/>
</dbReference>
<dbReference type="GO" id="GO:0005198">
    <property type="term" value="F:structural molecule activity"/>
    <property type="evidence" value="ECO:0007669"/>
    <property type="project" value="InterPro"/>
</dbReference>
<dbReference type="Gene3D" id="1.20.1330.10">
    <property type="entry name" value="f41 fragment of flagellin, N-terminal domain"/>
    <property type="match status" value="1"/>
</dbReference>
<dbReference type="InterPro" id="IPR001492">
    <property type="entry name" value="Flagellin"/>
</dbReference>
<dbReference type="InterPro" id="IPR046358">
    <property type="entry name" value="Flagellin_C"/>
</dbReference>
<dbReference type="InterPro" id="IPR001029">
    <property type="entry name" value="Flagellin_N"/>
</dbReference>
<dbReference type="PANTHER" id="PTHR42792">
    <property type="entry name" value="FLAGELLIN"/>
    <property type="match status" value="1"/>
</dbReference>
<dbReference type="PANTHER" id="PTHR42792:SF2">
    <property type="entry name" value="FLAGELLIN"/>
    <property type="match status" value="1"/>
</dbReference>
<dbReference type="Pfam" id="PF00700">
    <property type="entry name" value="Flagellin_C"/>
    <property type="match status" value="1"/>
</dbReference>
<dbReference type="Pfam" id="PF00669">
    <property type="entry name" value="Flagellin_N"/>
    <property type="match status" value="1"/>
</dbReference>
<dbReference type="SUPFAM" id="SSF64518">
    <property type="entry name" value="Phase 1 flagellin"/>
    <property type="match status" value="1"/>
</dbReference>
<accession>P02969</accession>
<gene>
    <name type="primary">fljJ</name>
    <name type="ordered locus">CC_1463</name>
</gene>
<organism>
    <name type="scientific">Caulobacter vibrioides (strain ATCC 19089 / CIP 103742 / CB 15)</name>
    <name type="common">Caulobacter crescentus</name>
    <dbReference type="NCBI Taxonomy" id="190650"/>
    <lineage>
        <taxon>Bacteria</taxon>
        <taxon>Pseudomonadati</taxon>
        <taxon>Pseudomonadota</taxon>
        <taxon>Alphaproteobacteria</taxon>
        <taxon>Caulobacterales</taxon>
        <taxon>Caulobacteraceae</taxon>
        <taxon>Caulobacter</taxon>
    </lineage>
</organism>
<keyword id="KW-0975">Bacterial flagellum</keyword>
<keyword id="KW-1185">Reference proteome</keyword>
<keyword id="KW-0964">Secreted</keyword>
<feature type="chain" id="PRO_0000182600" description="Flagellin FljJ">
    <location>
        <begin position="1"/>
        <end position="276"/>
    </location>
</feature>
<feature type="region of interest" description="Disordered" evidence="1">
    <location>
        <begin position="51"/>
        <end position="80"/>
    </location>
</feature>
<feature type="compositionally biased region" description="Basic and acidic residues" evidence="1">
    <location>
        <begin position="61"/>
        <end position="75"/>
    </location>
</feature>
<evidence type="ECO:0000256" key="1">
    <source>
        <dbReference type="SAM" id="MobiDB-lite"/>
    </source>
</evidence>
<evidence type="ECO:0000305" key="2"/>
<comment type="function">
    <text>Flagellin is the subunit protein which polymerizes to form the filaments of bacterial flagella.</text>
</comment>
<comment type="subunit">
    <text>In C.crescentus, the flagellar filament is composed of multiple flagellins of 29 kDa; 27 kDa and 25 kDa.</text>
</comment>
<comment type="subcellular location">
    <subcellularLocation>
        <location>Secreted</location>
    </subcellularLocation>
    <subcellularLocation>
        <location>Bacterial flagellum</location>
    </subcellularLocation>
</comment>
<comment type="similarity">
    <text evidence="2">Belongs to the bacterial flagellin family.</text>
</comment>
<comment type="sequence caution" evidence="2">
    <conflict type="frameshift">
        <sequence resource="EMBL" id="AE005673"/>
    </conflict>
</comment>
<reference key="1">
    <citation type="journal article" date="1983" name="J. Biol. Chem.">
        <title>The nucleotide sequence of the Mr = 28,500 flagellin gene of Caulobacter crescentus.</title>
        <authorList>
            <person name="Gill P.R."/>
            <person name="Agabian N."/>
        </authorList>
    </citation>
    <scope>NUCLEOTIDE SEQUENCE [GENOMIC DNA]</scope>
</reference>
<reference key="2">
    <citation type="journal article" date="2001" name="Proc. Natl. Acad. Sci. U.S.A.">
        <title>Complete genome sequence of Caulobacter crescentus.</title>
        <authorList>
            <person name="Nierman W.C."/>
            <person name="Feldblyum T.V."/>
            <person name="Laub M.T."/>
            <person name="Paulsen I.T."/>
            <person name="Nelson K.E."/>
            <person name="Eisen J.A."/>
            <person name="Heidelberg J.F."/>
            <person name="Alley M.R.K."/>
            <person name="Ohta N."/>
            <person name="Maddock J.R."/>
            <person name="Potocka I."/>
            <person name="Nelson W.C."/>
            <person name="Newton A."/>
            <person name="Stephens C."/>
            <person name="Phadke N.D."/>
            <person name="Ely B."/>
            <person name="DeBoy R.T."/>
            <person name="Dodson R.J."/>
            <person name="Durkin A.S."/>
            <person name="Gwinn M.L."/>
            <person name="Haft D.H."/>
            <person name="Kolonay J.F."/>
            <person name="Smit J."/>
            <person name="Craven M.B."/>
            <person name="Khouri H.M."/>
            <person name="Shetty J."/>
            <person name="Berry K.J."/>
            <person name="Utterback T.R."/>
            <person name="Tran K."/>
            <person name="Wolf A.M."/>
            <person name="Vamathevan J.J."/>
            <person name="Ermolaeva M.D."/>
            <person name="White O."/>
            <person name="Salzberg S.L."/>
            <person name="Venter J.C."/>
            <person name="Shapiro L."/>
            <person name="Fraser C.M."/>
        </authorList>
    </citation>
    <scope>NUCLEOTIDE SEQUENCE [LARGE SCALE GENOMIC DNA]</scope>
    <source>
        <strain>ATCC 19089 / CIP 103742 / CB 15</strain>
    </source>
</reference>
<sequence>MALSVNTNQPALIALQNLNRTNDDMQAVQTRINTGEAISTAKDTAAVWSHRPGAGDMSGLAREDEPGSGDIDRGRGPRAGESVSDLLKLMREKVVAAKDTSLTTTSRQALNADFQGLIKNLNQVLRSATFDGANLLDGSQAADMSFLADADAGQAITLTLQNLSLGGTINTLTATDDILDPVNAAGVLTRLDATLSAVNQAVGNIGTQAKQIDAHNTFVAKLNDVLETGVGNLVDADLAKESARLQALQVKQPLGAQALSIANGAPQIILSLFKGG</sequence>
<name>FLJJ_CAUVC</name>
<proteinExistence type="inferred from homology"/>